<feature type="chain" id="PRO_0000270617" description="Histone-lysine N-methyltransferase, H3 lysine-79 specific">
    <location>
        <begin position="1"/>
        <end position="492"/>
    </location>
</feature>
<feature type="domain" description="DOT1" evidence="3">
    <location>
        <begin position="168"/>
        <end position="491"/>
    </location>
</feature>
<feature type="region of interest" description="Disordered" evidence="4">
    <location>
        <begin position="1"/>
        <end position="101"/>
    </location>
</feature>
<feature type="compositionally biased region" description="Low complexity" evidence="4">
    <location>
        <begin position="32"/>
        <end position="45"/>
    </location>
</feature>
<feature type="compositionally biased region" description="Low complexity" evidence="4">
    <location>
        <begin position="52"/>
        <end position="64"/>
    </location>
</feature>
<feature type="binding site" evidence="3">
    <location>
        <begin position="297"/>
        <end position="300"/>
    </location>
    <ligand>
        <name>S-adenosyl-L-methionine</name>
        <dbReference type="ChEBI" id="CHEBI:59789"/>
    </ligand>
</feature>
<feature type="binding site" evidence="3">
    <location>
        <begin position="320"/>
        <end position="329"/>
    </location>
    <ligand>
        <name>S-adenosyl-L-methionine</name>
        <dbReference type="ChEBI" id="CHEBI:59789"/>
    </ligand>
</feature>
<feature type="binding site" evidence="3">
    <location>
        <position position="346"/>
    </location>
    <ligand>
        <name>S-adenosyl-L-methionine</name>
        <dbReference type="ChEBI" id="CHEBI:59789"/>
    </ligand>
</feature>
<feature type="binding site" evidence="3">
    <location>
        <begin position="382"/>
        <end position="383"/>
    </location>
    <ligand>
        <name>S-adenosyl-L-methionine</name>
        <dbReference type="ChEBI" id="CHEBI:59789"/>
    </ligand>
</feature>
<dbReference type="EC" id="2.1.1.360"/>
<dbReference type="EMBL" id="CR382131">
    <property type="protein sequence ID" value="CAG79874.1"/>
    <property type="molecule type" value="Genomic_DNA"/>
</dbReference>
<dbReference type="RefSeq" id="XP_504277.1">
    <property type="nucleotide sequence ID" value="XM_504277.1"/>
</dbReference>
<dbReference type="SMR" id="Q6C4Y5"/>
<dbReference type="FunCoup" id="Q6C4Y5">
    <property type="interactions" value="33"/>
</dbReference>
<dbReference type="STRING" id="284591.Q6C4Y5"/>
<dbReference type="EnsemblFungi" id="CAG79874">
    <property type="protein sequence ID" value="CAG79874"/>
    <property type="gene ID" value="YALI0_E22715g"/>
</dbReference>
<dbReference type="KEGG" id="yli:2912906"/>
<dbReference type="VEuPathDB" id="FungiDB:YALI0_E22715g"/>
<dbReference type="HOGENOM" id="CLU_027287_2_0_1"/>
<dbReference type="InParanoid" id="Q6C4Y5"/>
<dbReference type="OMA" id="IMEMTAL"/>
<dbReference type="OrthoDB" id="106033at4891"/>
<dbReference type="Proteomes" id="UP000001300">
    <property type="component" value="Chromosome E"/>
</dbReference>
<dbReference type="GO" id="GO:0000781">
    <property type="term" value="C:chromosome, telomeric region"/>
    <property type="evidence" value="ECO:0007669"/>
    <property type="project" value="GOC"/>
</dbReference>
<dbReference type="GO" id="GO:0000786">
    <property type="term" value="C:nucleosome"/>
    <property type="evidence" value="ECO:0007669"/>
    <property type="project" value="InterPro"/>
</dbReference>
<dbReference type="GO" id="GO:0005634">
    <property type="term" value="C:nucleus"/>
    <property type="evidence" value="ECO:0000318"/>
    <property type="project" value="GO_Central"/>
</dbReference>
<dbReference type="GO" id="GO:0042393">
    <property type="term" value="F:histone binding"/>
    <property type="evidence" value="ECO:0007669"/>
    <property type="project" value="InterPro"/>
</dbReference>
<dbReference type="GO" id="GO:0031151">
    <property type="term" value="F:histone H3K79 methyltransferase activity"/>
    <property type="evidence" value="ECO:0000318"/>
    <property type="project" value="GO_Central"/>
</dbReference>
<dbReference type="GO" id="GO:0140956">
    <property type="term" value="F:histone H3K79 trimethyltransferase activity"/>
    <property type="evidence" value="ECO:0007669"/>
    <property type="project" value="UniProtKB-EC"/>
</dbReference>
<dbReference type="GO" id="GO:0000077">
    <property type="term" value="P:DNA damage checkpoint signaling"/>
    <property type="evidence" value="ECO:0000318"/>
    <property type="project" value="GO_Central"/>
</dbReference>
<dbReference type="GO" id="GO:0006281">
    <property type="term" value="P:DNA repair"/>
    <property type="evidence" value="ECO:0000318"/>
    <property type="project" value="GO_Central"/>
</dbReference>
<dbReference type="GO" id="GO:0032259">
    <property type="term" value="P:methylation"/>
    <property type="evidence" value="ECO:0007669"/>
    <property type="project" value="UniProtKB-KW"/>
</dbReference>
<dbReference type="GO" id="GO:0031509">
    <property type="term" value="P:subtelomeric heterochromatin formation"/>
    <property type="evidence" value="ECO:0000318"/>
    <property type="project" value="GO_Central"/>
</dbReference>
<dbReference type="CDD" id="cd02440">
    <property type="entry name" value="AdoMet_MTases"/>
    <property type="match status" value="1"/>
</dbReference>
<dbReference type="FunFam" id="3.40.50.150:FF:000033">
    <property type="entry name" value="Histone-lysine N-methyltransferase, H3 lysine-79 specific"/>
    <property type="match status" value="1"/>
</dbReference>
<dbReference type="Gene3D" id="1.10.260.170">
    <property type="match status" value="1"/>
</dbReference>
<dbReference type="Gene3D" id="3.40.50.150">
    <property type="entry name" value="Vaccinia Virus protein VP39"/>
    <property type="match status" value="1"/>
</dbReference>
<dbReference type="InterPro" id="IPR021162">
    <property type="entry name" value="Dot1"/>
</dbReference>
<dbReference type="InterPro" id="IPR025789">
    <property type="entry name" value="DOT1_dom"/>
</dbReference>
<dbReference type="InterPro" id="IPR030445">
    <property type="entry name" value="H3-K79_meTrfase"/>
</dbReference>
<dbReference type="InterPro" id="IPR029063">
    <property type="entry name" value="SAM-dependent_MTases_sf"/>
</dbReference>
<dbReference type="PANTHER" id="PTHR21451">
    <property type="entry name" value="HISTONE H3 METHYLTRANSFERASE"/>
    <property type="match status" value="1"/>
</dbReference>
<dbReference type="PANTHER" id="PTHR21451:SF0">
    <property type="entry name" value="HISTONE-LYSINE N-METHYLTRANSFERASE, H3 LYSINE-79 SPECIFIC"/>
    <property type="match status" value="1"/>
</dbReference>
<dbReference type="Pfam" id="PF08123">
    <property type="entry name" value="DOT1"/>
    <property type="match status" value="1"/>
</dbReference>
<dbReference type="PIRSF" id="PIRSF017570">
    <property type="entry name" value="Histone_H3-K79_MeTrfase"/>
    <property type="match status" value="1"/>
</dbReference>
<dbReference type="SUPFAM" id="SSF53335">
    <property type="entry name" value="S-adenosyl-L-methionine-dependent methyltransferases"/>
    <property type="match status" value="1"/>
</dbReference>
<dbReference type="PROSITE" id="PS51569">
    <property type="entry name" value="DOT1"/>
    <property type="match status" value="1"/>
</dbReference>
<gene>
    <name type="primary">DOT1</name>
    <name type="ordered locus">YALI0E22715g</name>
</gene>
<proteinExistence type="inferred from homology"/>
<name>DOT1_YARLI</name>
<reference key="1">
    <citation type="journal article" date="2004" name="Nature">
        <title>Genome evolution in yeasts.</title>
        <authorList>
            <person name="Dujon B."/>
            <person name="Sherman D."/>
            <person name="Fischer G."/>
            <person name="Durrens P."/>
            <person name="Casaregola S."/>
            <person name="Lafontaine I."/>
            <person name="de Montigny J."/>
            <person name="Marck C."/>
            <person name="Neuveglise C."/>
            <person name="Talla E."/>
            <person name="Goffard N."/>
            <person name="Frangeul L."/>
            <person name="Aigle M."/>
            <person name="Anthouard V."/>
            <person name="Babour A."/>
            <person name="Barbe V."/>
            <person name="Barnay S."/>
            <person name="Blanchin S."/>
            <person name="Beckerich J.-M."/>
            <person name="Beyne E."/>
            <person name="Bleykasten C."/>
            <person name="Boisrame A."/>
            <person name="Boyer J."/>
            <person name="Cattolico L."/>
            <person name="Confanioleri F."/>
            <person name="de Daruvar A."/>
            <person name="Despons L."/>
            <person name="Fabre E."/>
            <person name="Fairhead C."/>
            <person name="Ferry-Dumazet H."/>
            <person name="Groppi A."/>
            <person name="Hantraye F."/>
            <person name="Hennequin C."/>
            <person name="Jauniaux N."/>
            <person name="Joyet P."/>
            <person name="Kachouri R."/>
            <person name="Kerrest A."/>
            <person name="Koszul R."/>
            <person name="Lemaire M."/>
            <person name="Lesur I."/>
            <person name="Ma L."/>
            <person name="Muller H."/>
            <person name="Nicaud J.-M."/>
            <person name="Nikolski M."/>
            <person name="Oztas S."/>
            <person name="Ozier-Kalogeropoulos O."/>
            <person name="Pellenz S."/>
            <person name="Potier S."/>
            <person name="Richard G.-F."/>
            <person name="Straub M.-L."/>
            <person name="Suleau A."/>
            <person name="Swennen D."/>
            <person name="Tekaia F."/>
            <person name="Wesolowski-Louvel M."/>
            <person name="Westhof E."/>
            <person name="Wirth B."/>
            <person name="Zeniou-Meyer M."/>
            <person name="Zivanovic Y."/>
            <person name="Bolotin-Fukuhara M."/>
            <person name="Thierry A."/>
            <person name="Bouchier C."/>
            <person name="Caudron B."/>
            <person name="Scarpelli C."/>
            <person name="Gaillardin C."/>
            <person name="Weissenbach J."/>
            <person name="Wincker P."/>
            <person name="Souciet J.-L."/>
        </authorList>
    </citation>
    <scope>NUCLEOTIDE SEQUENCE [LARGE SCALE GENOMIC DNA]</scope>
    <source>
        <strain>CLIB 122 / E 150</strain>
    </source>
</reference>
<evidence type="ECO:0000250" key="1"/>
<evidence type="ECO:0000250" key="2">
    <source>
        <dbReference type="UniProtKB" id="Q04089"/>
    </source>
</evidence>
<evidence type="ECO:0000255" key="3">
    <source>
        <dbReference type="PROSITE-ProRule" id="PRU00902"/>
    </source>
</evidence>
<evidence type="ECO:0000256" key="4">
    <source>
        <dbReference type="SAM" id="MobiDB-lite"/>
    </source>
</evidence>
<accession>Q6C4Y5</accession>
<sequence length="492" mass="53624">MFFSHLGKKNGGPTAKSSDVKRKVTKVKTRKPVVTSVSKSPSPSKTAPPPATAAAAATAAAKPSTPRKSRRKTPNIYQLSKSSLSEVDTEESEREVSSSLSTPGLYELVPRDIVTAGFGSAELATSIHITNASESGNLSMTDIYEPVSTDKSLSDRVKLGALSCDFVEDYSLIKPKVPGEFEPVREILSIMEMTALHFVDKGASEEIKHPVMDDCIMRRFRRSYEGGDLEGMKTSMKEFDEVVKTQRAEGAILANLKQLTAVPQDLAYFLLNQVYSRIVSPESKSLRDYKAFSNNVYGELMPPFMSTVFQKTDLQPSSVFVDLGSGVGNCTLQAALEVGCESWGCEVMTNASSLAEKQKIELYSRAKMFGIKTGDIHLVASSFVHNDEVHSAISRADVLLVNNYAFDGTLNAHLLDMFLDLKEGCKIVSLKSFVPVGHVISEHNIESPVNILKVQKLDFYSGSVSWTAAGGTYYISTVDRSAIKAFLSKGGY</sequence>
<organism>
    <name type="scientific">Yarrowia lipolytica (strain CLIB 122 / E 150)</name>
    <name type="common">Yeast</name>
    <name type="synonym">Candida lipolytica</name>
    <dbReference type="NCBI Taxonomy" id="284591"/>
    <lineage>
        <taxon>Eukaryota</taxon>
        <taxon>Fungi</taxon>
        <taxon>Dikarya</taxon>
        <taxon>Ascomycota</taxon>
        <taxon>Saccharomycotina</taxon>
        <taxon>Dipodascomycetes</taxon>
        <taxon>Dipodascales</taxon>
        <taxon>Dipodascales incertae sedis</taxon>
        <taxon>Yarrowia</taxon>
    </lineage>
</organism>
<protein>
    <recommendedName>
        <fullName>Histone-lysine N-methyltransferase, H3 lysine-79 specific</fullName>
        <ecNumber>2.1.1.360</ecNumber>
    </recommendedName>
    <alternativeName>
        <fullName>Histone H3-K79 methyltransferase</fullName>
        <shortName>H3-K79-HMTase</shortName>
    </alternativeName>
</protein>
<keyword id="KW-0156">Chromatin regulator</keyword>
<keyword id="KW-0489">Methyltransferase</keyword>
<keyword id="KW-0539">Nucleus</keyword>
<keyword id="KW-1185">Reference proteome</keyword>
<keyword id="KW-0677">Repeat</keyword>
<keyword id="KW-0949">S-adenosyl-L-methionine</keyword>
<keyword id="KW-0804">Transcription</keyword>
<keyword id="KW-0805">Transcription regulation</keyword>
<keyword id="KW-0808">Transferase</keyword>
<comment type="function">
    <text evidence="2">Histone methyltransferase that specifically trimethylates histone H3 to form H3K79me3. This methylation is required for telomere silencing and for the pachytene checkpoint during the meiotic cell cycle by allowing the recruitment of RAD9 to double strand breaks. Nucleosomes are preferred as substrate compared to free histone.</text>
</comment>
<comment type="catalytic activity">
    <reaction evidence="2 3">
        <text>L-lysyl(79)-[histone H3] + 3 S-adenosyl-L-methionine = N(6),N(6),N(6)-trimethyl-L-lysyl(79)-[histone H3] + 3 S-adenosyl-L-homocysteine + 3 H(+)</text>
        <dbReference type="Rhea" id="RHEA:60328"/>
        <dbReference type="Rhea" id="RHEA-COMP:15549"/>
        <dbReference type="Rhea" id="RHEA-COMP:15552"/>
        <dbReference type="ChEBI" id="CHEBI:15378"/>
        <dbReference type="ChEBI" id="CHEBI:29969"/>
        <dbReference type="ChEBI" id="CHEBI:57856"/>
        <dbReference type="ChEBI" id="CHEBI:59789"/>
        <dbReference type="ChEBI" id="CHEBI:61961"/>
        <dbReference type="EC" id="2.1.1.360"/>
    </reaction>
</comment>
<comment type="activity regulation">
    <text evidence="1">Ubiquitination of histone H2B to form H2BK123ub1 is required for efficient DOT1 methyltransferase activity on histone H3.</text>
</comment>
<comment type="subcellular location">
    <subcellularLocation>
        <location evidence="1">Nucleus</location>
    </subcellularLocation>
</comment>
<comment type="miscellaneous">
    <text>In contrast to other lysine histone methyltransferases, it does not contain a SET domain, suggesting the existence of another mechanism for methylation of lysine residues of histones.</text>
</comment>
<comment type="similarity">
    <text evidence="3">Belongs to the class I-like SAM-binding methyltransferase superfamily. DOT1 family.</text>
</comment>